<evidence type="ECO:0000255" key="1">
    <source>
        <dbReference type="HAMAP-Rule" id="MF_00139"/>
    </source>
</evidence>
<evidence type="ECO:0000255" key="2">
    <source>
        <dbReference type="PROSITE-ProRule" id="PRU01202"/>
    </source>
</evidence>
<keyword id="KW-0378">Hydrolase</keyword>
<keyword id="KW-0511">Multifunctional enzyme</keyword>
<keyword id="KW-0658">Purine biosynthesis</keyword>
<keyword id="KW-1185">Reference proteome</keyword>
<keyword id="KW-0808">Transferase</keyword>
<sequence length="511" mass="56318">MIQIKRALISVSDKSGLVEFAKFLNQNGVEIISTGGTLKLLKDNGIAAIAIDDYTGFPEILDGRVKTLHPKVHGGLLGVISNPAHKQKMEELKIPKIDLVVVNLYPFLKTVSKPEVQLEEAIENIDIGGPSMIRSAAKNYKHTLVLTDPNDYKKIQNLISSSGISEEISASYMRKAFSHTAMYDAAISSWFYKQSGEVFPDVLNLSFIKKQKLRYGENPHQAASFYEPLFTKSDFSPLQGKELSFNNMLDFDAAFHISSLLPENTVCIIKHLNPCGIAYADNPLEAFQLARRTDPISAFGGVIGIKGQVNGELATSITENFVEGVIAQKFTQEALEVFSKKPNIRLIEIQDFKEALDELDLRPIHHGLLIQDRDYTTITEKDLKVVTKKQPSPDDIRGLMFAWSCVRFIKSNAIVYTEENATLGIGAGQMSRVDSVQLGANKALNVGLSVVGSYVASDAFFPFRDGIDALAKAGAKAIIQPGGSVRDEEVIQAADEHGLIMVFTGMRHFRH</sequence>
<gene>
    <name evidence="1" type="primary">purH</name>
    <name type="ordered locus">LA_2283</name>
</gene>
<name>PUR9_LEPIN</name>
<protein>
    <recommendedName>
        <fullName evidence="1">Bifunctional purine biosynthesis protein PurH</fullName>
    </recommendedName>
    <domain>
        <recommendedName>
            <fullName evidence="1">Phosphoribosylaminoimidazolecarboxamide formyltransferase</fullName>
            <ecNumber evidence="1">2.1.2.3</ecNumber>
        </recommendedName>
        <alternativeName>
            <fullName evidence="1">AICAR transformylase</fullName>
        </alternativeName>
    </domain>
    <domain>
        <recommendedName>
            <fullName evidence="1">IMP cyclohydrolase</fullName>
            <ecNumber evidence="1">3.5.4.10</ecNumber>
        </recommendedName>
        <alternativeName>
            <fullName evidence="1">ATIC</fullName>
        </alternativeName>
        <alternativeName>
            <fullName evidence="1">IMP synthase</fullName>
        </alternativeName>
        <alternativeName>
            <fullName evidence="1">Inosinicase</fullName>
        </alternativeName>
    </domain>
</protein>
<dbReference type="EC" id="2.1.2.3" evidence="1"/>
<dbReference type="EC" id="3.5.4.10" evidence="1"/>
<dbReference type="EMBL" id="AE010300">
    <property type="protein sequence ID" value="AAN49482.1"/>
    <property type="molecule type" value="Genomic_DNA"/>
</dbReference>
<dbReference type="RefSeq" id="NP_712464.1">
    <property type="nucleotide sequence ID" value="NC_004342.2"/>
</dbReference>
<dbReference type="RefSeq" id="WP_000614727.1">
    <property type="nucleotide sequence ID" value="NC_004342.2"/>
</dbReference>
<dbReference type="SMR" id="Q8F3W6"/>
<dbReference type="FunCoup" id="Q8F3W6">
    <property type="interactions" value="457"/>
</dbReference>
<dbReference type="STRING" id="189518.LA_2283"/>
<dbReference type="PaxDb" id="189518-LA_2283"/>
<dbReference type="EnsemblBacteria" id="AAN49482">
    <property type="protein sequence ID" value="AAN49482"/>
    <property type="gene ID" value="LA_2283"/>
</dbReference>
<dbReference type="KEGG" id="lil:LA_2283"/>
<dbReference type="PATRIC" id="fig|189518.3.peg.2269"/>
<dbReference type="HOGENOM" id="CLU_016316_5_2_12"/>
<dbReference type="InParanoid" id="Q8F3W6"/>
<dbReference type="OrthoDB" id="9802065at2"/>
<dbReference type="UniPathway" id="UPA00074">
    <property type="reaction ID" value="UER00133"/>
</dbReference>
<dbReference type="UniPathway" id="UPA00074">
    <property type="reaction ID" value="UER00135"/>
</dbReference>
<dbReference type="Proteomes" id="UP000001408">
    <property type="component" value="Chromosome I"/>
</dbReference>
<dbReference type="GO" id="GO:0005829">
    <property type="term" value="C:cytosol"/>
    <property type="evidence" value="ECO:0000318"/>
    <property type="project" value="GO_Central"/>
</dbReference>
<dbReference type="GO" id="GO:0003937">
    <property type="term" value="F:IMP cyclohydrolase activity"/>
    <property type="evidence" value="ECO:0000318"/>
    <property type="project" value="GO_Central"/>
</dbReference>
<dbReference type="GO" id="GO:0004643">
    <property type="term" value="F:phosphoribosylaminoimidazolecarboxamide formyltransferase activity"/>
    <property type="evidence" value="ECO:0000318"/>
    <property type="project" value="GO_Central"/>
</dbReference>
<dbReference type="GO" id="GO:0006189">
    <property type="term" value="P:'de novo' IMP biosynthetic process"/>
    <property type="evidence" value="ECO:0000318"/>
    <property type="project" value="GO_Central"/>
</dbReference>
<dbReference type="CDD" id="cd01421">
    <property type="entry name" value="IMPCH"/>
    <property type="match status" value="1"/>
</dbReference>
<dbReference type="FunFam" id="3.40.140.20:FF:000001">
    <property type="entry name" value="Bifunctional purine biosynthesis protein PurH"/>
    <property type="match status" value="1"/>
</dbReference>
<dbReference type="FunFam" id="3.40.50.1380:FF:000001">
    <property type="entry name" value="Bifunctional purine biosynthesis protein PurH"/>
    <property type="match status" value="1"/>
</dbReference>
<dbReference type="Gene3D" id="3.40.140.20">
    <property type="match status" value="2"/>
</dbReference>
<dbReference type="Gene3D" id="3.40.50.1380">
    <property type="entry name" value="Methylglyoxal synthase-like domain"/>
    <property type="match status" value="1"/>
</dbReference>
<dbReference type="HAMAP" id="MF_00139">
    <property type="entry name" value="PurH"/>
    <property type="match status" value="1"/>
</dbReference>
<dbReference type="InterPro" id="IPR024051">
    <property type="entry name" value="AICAR_Tfase_dup_dom_sf"/>
</dbReference>
<dbReference type="InterPro" id="IPR016193">
    <property type="entry name" value="Cytidine_deaminase-like"/>
</dbReference>
<dbReference type="InterPro" id="IPR011607">
    <property type="entry name" value="MGS-like_dom"/>
</dbReference>
<dbReference type="InterPro" id="IPR036914">
    <property type="entry name" value="MGS-like_dom_sf"/>
</dbReference>
<dbReference type="InterPro" id="IPR002695">
    <property type="entry name" value="PurH-like"/>
</dbReference>
<dbReference type="NCBIfam" id="NF002049">
    <property type="entry name" value="PRK00881.1"/>
    <property type="match status" value="1"/>
</dbReference>
<dbReference type="NCBIfam" id="TIGR00355">
    <property type="entry name" value="purH"/>
    <property type="match status" value="1"/>
</dbReference>
<dbReference type="PANTHER" id="PTHR11692:SF0">
    <property type="entry name" value="BIFUNCTIONAL PURINE BIOSYNTHESIS PROTEIN ATIC"/>
    <property type="match status" value="1"/>
</dbReference>
<dbReference type="PANTHER" id="PTHR11692">
    <property type="entry name" value="BIFUNCTIONAL PURINE BIOSYNTHESIS PROTEIN PURH"/>
    <property type="match status" value="1"/>
</dbReference>
<dbReference type="Pfam" id="PF01808">
    <property type="entry name" value="AICARFT_IMPCHas"/>
    <property type="match status" value="1"/>
</dbReference>
<dbReference type="Pfam" id="PF02142">
    <property type="entry name" value="MGS"/>
    <property type="match status" value="1"/>
</dbReference>
<dbReference type="PIRSF" id="PIRSF000414">
    <property type="entry name" value="AICARFT_IMPCHas"/>
    <property type="match status" value="1"/>
</dbReference>
<dbReference type="SMART" id="SM00798">
    <property type="entry name" value="AICARFT_IMPCHas"/>
    <property type="match status" value="1"/>
</dbReference>
<dbReference type="SMART" id="SM00851">
    <property type="entry name" value="MGS"/>
    <property type="match status" value="1"/>
</dbReference>
<dbReference type="SUPFAM" id="SSF53927">
    <property type="entry name" value="Cytidine deaminase-like"/>
    <property type="match status" value="1"/>
</dbReference>
<dbReference type="SUPFAM" id="SSF52335">
    <property type="entry name" value="Methylglyoxal synthase-like"/>
    <property type="match status" value="1"/>
</dbReference>
<dbReference type="PROSITE" id="PS51855">
    <property type="entry name" value="MGS"/>
    <property type="match status" value="1"/>
</dbReference>
<organism>
    <name type="scientific">Leptospira interrogans serogroup Icterohaemorrhagiae serovar Lai (strain 56601)</name>
    <dbReference type="NCBI Taxonomy" id="189518"/>
    <lineage>
        <taxon>Bacteria</taxon>
        <taxon>Pseudomonadati</taxon>
        <taxon>Spirochaetota</taxon>
        <taxon>Spirochaetia</taxon>
        <taxon>Leptospirales</taxon>
        <taxon>Leptospiraceae</taxon>
        <taxon>Leptospira</taxon>
    </lineage>
</organism>
<comment type="catalytic activity">
    <reaction evidence="1">
        <text>(6R)-10-formyltetrahydrofolate + 5-amino-1-(5-phospho-beta-D-ribosyl)imidazole-4-carboxamide = 5-formamido-1-(5-phospho-D-ribosyl)imidazole-4-carboxamide + (6S)-5,6,7,8-tetrahydrofolate</text>
        <dbReference type="Rhea" id="RHEA:22192"/>
        <dbReference type="ChEBI" id="CHEBI:57453"/>
        <dbReference type="ChEBI" id="CHEBI:58467"/>
        <dbReference type="ChEBI" id="CHEBI:58475"/>
        <dbReference type="ChEBI" id="CHEBI:195366"/>
        <dbReference type="EC" id="2.1.2.3"/>
    </reaction>
</comment>
<comment type="catalytic activity">
    <reaction evidence="1">
        <text>IMP + H2O = 5-formamido-1-(5-phospho-D-ribosyl)imidazole-4-carboxamide</text>
        <dbReference type="Rhea" id="RHEA:18445"/>
        <dbReference type="ChEBI" id="CHEBI:15377"/>
        <dbReference type="ChEBI" id="CHEBI:58053"/>
        <dbReference type="ChEBI" id="CHEBI:58467"/>
        <dbReference type="EC" id="3.5.4.10"/>
    </reaction>
</comment>
<comment type="pathway">
    <text evidence="1">Purine metabolism; IMP biosynthesis via de novo pathway; 5-formamido-1-(5-phospho-D-ribosyl)imidazole-4-carboxamide from 5-amino-1-(5-phospho-D-ribosyl)imidazole-4-carboxamide (10-formyl THF route): step 1/1.</text>
</comment>
<comment type="pathway">
    <text evidence="1">Purine metabolism; IMP biosynthesis via de novo pathway; IMP from 5-formamido-1-(5-phospho-D-ribosyl)imidazole-4-carboxamide: step 1/1.</text>
</comment>
<comment type="domain">
    <text evidence="1">The IMP cyclohydrolase activity resides in the N-terminal region.</text>
</comment>
<comment type="similarity">
    <text evidence="1">Belongs to the PurH family.</text>
</comment>
<proteinExistence type="inferred from homology"/>
<accession>Q8F3W6</accession>
<reference key="1">
    <citation type="journal article" date="2003" name="Nature">
        <title>Unique physiological and pathogenic features of Leptospira interrogans revealed by whole-genome sequencing.</title>
        <authorList>
            <person name="Ren S.-X."/>
            <person name="Fu G."/>
            <person name="Jiang X.-G."/>
            <person name="Zeng R."/>
            <person name="Miao Y.-G."/>
            <person name="Xu H."/>
            <person name="Zhang Y.-X."/>
            <person name="Xiong H."/>
            <person name="Lu G."/>
            <person name="Lu L.-F."/>
            <person name="Jiang H.-Q."/>
            <person name="Jia J."/>
            <person name="Tu Y.-F."/>
            <person name="Jiang J.-X."/>
            <person name="Gu W.-Y."/>
            <person name="Zhang Y.-Q."/>
            <person name="Cai Z."/>
            <person name="Sheng H.-H."/>
            <person name="Yin H.-F."/>
            <person name="Zhang Y."/>
            <person name="Zhu G.-F."/>
            <person name="Wan M."/>
            <person name="Huang H.-L."/>
            <person name="Qian Z."/>
            <person name="Wang S.-Y."/>
            <person name="Ma W."/>
            <person name="Yao Z.-J."/>
            <person name="Shen Y."/>
            <person name="Qiang B.-Q."/>
            <person name="Xia Q.-C."/>
            <person name="Guo X.-K."/>
            <person name="Danchin A."/>
            <person name="Saint Girons I."/>
            <person name="Somerville R.L."/>
            <person name="Wen Y.-M."/>
            <person name="Shi M.-H."/>
            <person name="Chen Z."/>
            <person name="Xu J.-G."/>
            <person name="Zhao G.-P."/>
        </authorList>
    </citation>
    <scope>NUCLEOTIDE SEQUENCE [LARGE SCALE GENOMIC DNA]</scope>
    <source>
        <strain>56601</strain>
    </source>
</reference>
<feature type="chain" id="PRO_0000192100" description="Bifunctional purine biosynthesis protein PurH">
    <location>
        <begin position="1"/>
        <end position="511"/>
    </location>
</feature>
<feature type="domain" description="MGS-like" evidence="2">
    <location>
        <begin position="1"/>
        <end position="147"/>
    </location>
</feature>